<protein>
    <recommendedName>
        <fullName evidence="2">Small ribosomal subunit protein uS12</fullName>
    </recommendedName>
    <alternativeName>
        <fullName evidence="4">30S ribosomal protein S12</fullName>
    </alternativeName>
</protein>
<accession>Q7UN32</accession>
<evidence type="ECO:0000250" key="1"/>
<evidence type="ECO:0000255" key="2">
    <source>
        <dbReference type="HAMAP-Rule" id="MF_00403"/>
    </source>
</evidence>
<evidence type="ECO:0000256" key="3">
    <source>
        <dbReference type="SAM" id="MobiDB-lite"/>
    </source>
</evidence>
<evidence type="ECO:0000305" key="4"/>
<dbReference type="EMBL" id="BX294146">
    <property type="protein sequence ID" value="CAD75587.1"/>
    <property type="molecule type" value="Genomic_DNA"/>
</dbReference>
<dbReference type="RefSeq" id="NP_868040.1">
    <property type="nucleotide sequence ID" value="NC_005027.1"/>
</dbReference>
<dbReference type="RefSeq" id="WP_007326865.1">
    <property type="nucleotide sequence ID" value="NC_005027.1"/>
</dbReference>
<dbReference type="SMR" id="Q7UN32"/>
<dbReference type="FunCoup" id="Q7UN32">
    <property type="interactions" value="516"/>
</dbReference>
<dbReference type="STRING" id="243090.RB7818"/>
<dbReference type="EnsemblBacteria" id="CAD75587">
    <property type="protein sequence ID" value="CAD75587"/>
    <property type="gene ID" value="RB7818"/>
</dbReference>
<dbReference type="GeneID" id="90608431"/>
<dbReference type="KEGG" id="rba:RB7818"/>
<dbReference type="PATRIC" id="fig|243090.15.peg.3773"/>
<dbReference type="eggNOG" id="COG0048">
    <property type="taxonomic scope" value="Bacteria"/>
</dbReference>
<dbReference type="HOGENOM" id="CLU_104295_1_2_0"/>
<dbReference type="InParanoid" id="Q7UN32"/>
<dbReference type="OrthoDB" id="9802366at2"/>
<dbReference type="Proteomes" id="UP000001025">
    <property type="component" value="Chromosome"/>
</dbReference>
<dbReference type="GO" id="GO:0005840">
    <property type="term" value="C:ribosome"/>
    <property type="evidence" value="ECO:0000318"/>
    <property type="project" value="GO_Central"/>
</dbReference>
<dbReference type="GO" id="GO:0015935">
    <property type="term" value="C:small ribosomal subunit"/>
    <property type="evidence" value="ECO:0007669"/>
    <property type="project" value="InterPro"/>
</dbReference>
<dbReference type="GO" id="GO:0019843">
    <property type="term" value="F:rRNA binding"/>
    <property type="evidence" value="ECO:0007669"/>
    <property type="project" value="UniProtKB-UniRule"/>
</dbReference>
<dbReference type="GO" id="GO:0003735">
    <property type="term" value="F:structural constituent of ribosome"/>
    <property type="evidence" value="ECO:0000318"/>
    <property type="project" value="GO_Central"/>
</dbReference>
<dbReference type="GO" id="GO:0000049">
    <property type="term" value="F:tRNA binding"/>
    <property type="evidence" value="ECO:0007669"/>
    <property type="project" value="UniProtKB-UniRule"/>
</dbReference>
<dbReference type="GO" id="GO:0006412">
    <property type="term" value="P:translation"/>
    <property type="evidence" value="ECO:0000318"/>
    <property type="project" value="GO_Central"/>
</dbReference>
<dbReference type="CDD" id="cd03368">
    <property type="entry name" value="Ribosomal_S12"/>
    <property type="match status" value="1"/>
</dbReference>
<dbReference type="FunFam" id="2.40.50.140:FF:000001">
    <property type="entry name" value="30S ribosomal protein S12"/>
    <property type="match status" value="1"/>
</dbReference>
<dbReference type="Gene3D" id="2.40.50.140">
    <property type="entry name" value="Nucleic acid-binding proteins"/>
    <property type="match status" value="1"/>
</dbReference>
<dbReference type="HAMAP" id="MF_00403_B">
    <property type="entry name" value="Ribosomal_uS12_B"/>
    <property type="match status" value="1"/>
</dbReference>
<dbReference type="InterPro" id="IPR012340">
    <property type="entry name" value="NA-bd_OB-fold"/>
</dbReference>
<dbReference type="InterPro" id="IPR006032">
    <property type="entry name" value="Ribosomal_uS12"/>
</dbReference>
<dbReference type="InterPro" id="IPR005679">
    <property type="entry name" value="Ribosomal_uS12_bac"/>
</dbReference>
<dbReference type="NCBIfam" id="TIGR00981">
    <property type="entry name" value="rpsL_bact"/>
    <property type="match status" value="1"/>
</dbReference>
<dbReference type="PANTHER" id="PTHR11652">
    <property type="entry name" value="30S RIBOSOMAL PROTEIN S12 FAMILY MEMBER"/>
    <property type="match status" value="1"/>
</dbReference>
<dbReference type="Pfam" id="PF00164">
    <property type="entry name" value="Ribosom_S12_S23"/>
    <property type="match status" value="1"/>
</dbReference>
<dbReference type="PIRSF" id="PIRSF002133">
    <property type="entry name" value="Ribosomal_S12/S23"/>
    <property type="match status" value="1"/>
</dbReference>
<dbReference type="PRINTS" id="PR01034">
    <property type="entry name" value="RIBOSOMALS12"/>
</dbReference>
<dbReference type="SUPFAM" id="SSF50249">
    <property type="entry name" value="Nucleic acid-binding proteins"/>
    <property type="match status" value="1"/>
</dbReference>
<dbReference type="PROSITE" id="PS00055">
    <property type="entry name" value="RIBOSOMAL_S12"/>
    <property type="match status" value="1"/>
</dbReference>
<sequence>MPTINQLVRKNRKQKKSQSKSPVLEKCPQKQGVCLQVRTMTPKKPNSALRKITRVRLSNGKEVTVYIPGEGHNLQEHSIVLVRGGRVRDLPGVRYQVVRGSRDALGVDGRKQSRSRYGAKK</sequence>
<proteinExistence type="inferred from homology"/>
<keyword id="KW-0488">Methylation</keyword>
<keyword id="KW-1185">Reference proteome</keyword>
<keyword id="KW-0687">Ribonucleoprotein</keyword>
<keyword id="KW-0689">Ribosomal protein</keyword>
<keyword id="KW-0694">RNA-binding</keyword>
<keyword id="KW-0699">rRNA-binding</keyword>
<keyword id="KW-0820">tRNA-binding</keyword>
<gene>
    <name evidence="2" type="primary">rpsL</name>
    <name type="ordered locus">RB7818</name>
</gene>
<comment type="function">
    <text evidence="2">With S4 and S5 plays an important role in translational accuracy.</text>
</comment>
<comment type="function">
    <text evidence="2">Interacts with and stabilizes bases of the 16S rRNA that are involved in tRNA selection in the A site and with the mRNA backbone. Located at the interface of the 30S and 50S subunits, it traverses the body of the 30S subunit contacting proteins on the other side and probably holding the rRNA structure together. The combined cluster of proteins S8, S12 and S17 appears to hold together the shoulder and platform of the 30S subunit.</text>
</comment>
<comment type="subunit">
    <text evidence="2">Part of the 30S ribosomal subunit. Contacts proteins S8 and S17. May interact with IF1 in the 30S initiation complex.</text>
</comment>
<comment type="similarity">
    <text evidence="2">Belongs to the universal ribosomal protein uS12 family.</text>
</comment>
<feature type="chain" id="PRO_0000146296" description="Small ribosomal subunit protein uS12">
    <location>
        <begin position="1"/>
        <end position="121"/>
    </location>
</feature>
<feature type="region of interest" description="Disordered" evidence="3">
    <location>
        <begin position="1"/>
        <end position="25"/>
    </location>
</feature>
<feature type="compositionally biased region" description="Basic residues" evidence="3">
    <location>
        <begin position="9"/>
        <end position="18"/>
    </location>
</feature>
<feature type="modified residue" description="3-methylthioaspartic acid" evidence="1">
    <location>
        <position position="89"/>
    </location>
</feature>
<name>RS12_RHOBA</name>
<organism>
    <name type="scientific">Rhodopirellula baltica (strain DSM 10527 / NCIMB 13988 / SH1)</name>
    <dbReference type="NCBI Taxonomy" id="243090"/>
    <lineage>
        <taxon>Bacteria</taxon>
        <taxon>Pseudomonadati</taxon>
        <taxon>Planctomycetota</taxon>
        <taxon>Planctomycetia</taxon>
        <taxon>Pirellulales</taxon>
        <taxon>Pirellulaceae</taxon>
        <taxon>Rhodopirellula</taxon>
    </lineage>
</organism>
<reference key="1">
    <citation type="journal article" date="2003" name="Proc. Natl. Acad. Sci. U.S.A.">
        <title>Complete genome sequence of the marine planctomycete Pirellula sp. strain 1.</title>
        <authorList>
            <person name="Gloeckner F.O."/>
            <person name="Kube M."/>
            <person name="Bauer M."/>
            <person name="Teeling H."/>
            <person name="Lombardot T."/>
            <person name="Ludwig W."/>
            <person name="Gade D."/>
            <person name="Beck A."/>
            <person name="Borzym K."/>
            <person name="Heitmann K."/>
            <person name="Rabus R."/>
            <person name="Schlesner H."/>
            <person name="Amann R."/>
            <person name="Reinhardt R."/>
        </authorList>
    </citation>
    <scope>NUCLEOTIDE SEQUENCE [LARGE SCALE GENOMIC DNA]</scope>
    <source>
        <strain>DSM 10527 / NCIMB 13988 / SH1</strain>
    </source>
</reference>